<protein>
    <recommendedName>
        <fullName evidence="1">L-threonine 3-dehydrogenase</fullName>
        <shortName evidence="1">TDH</shortName>
        <ecNumber evidence="1">1.1.1.103</ecNumber>
    </recommendedName>
</protein>
<reference key="1">
    <citation type="journal article" date="2007" name="Nat. Biotechnol.">
        <title>Comparative analysis of the complete genome sequence of the plant growth-promoting bacterium Bacillus amyloliquefaciens FZB42.</title>
        <authorList>
            <person name="Chen X.H."/>
            <person name="Koumoutsi A."/>
            <person name="Scholz R."/>
            <person name="Eisenreich A."/>
            <person name="Schneider K."/>
            <person name="Heinemeyer I."/>
            <person name="Morgenstern B."/>
            <person name="Voss B."/>
            <person name="Hess W.R."/>
            <person name="Reva O."/>
            <person name="Junge H."/>
            <person name="Voigt B."/>
            <person name="Jungblut P.R."/>
            <person name="Vater J."/>
            <person name="Suessmuth R."/>
            <person name="Liesegang H."/>
            <person name="Strittmatter A."/>
            <person name="Gottschalk G."/>
            <person name="Borriss R."/>
        </authorList>
    </citation>
    <scope>NUCLEOTIDE SEQUENCE [LARGE SCALE GENOMIC DNA]</scope>
    <source>
        <strain>DSM 23117 / BGSC 10A6 / LMG 26770 / FZB42</strain>
    </source>
</reference>
<evidence type="ECO:0000255" key="1">
    <source>
        <dbReference type="HAMAP-Rule" id="MF_00627"/>
    </source>
</evidence>
<accession>A7Z4X0</accession>
<organism>
    <name type="scientific">Bacillus velezensis (strain DSM 23117 / BGSC 10A6 / LMG 26770 / FZB42)</name>
    <name type="common">Bacillus amyloliquefaciens subsp. plantarum</name>
    <dbReference type="NCBI Taxonomy" id="326423"/>
    <lineage>
        <taxon>Bacteria</taxon>
        <taxon>Bacillati</taxon>
        <taxon>Bacillota</taxon>
        <taxon>Bacilli</taxon>
        <taxon>Bacillales</taxon>
        <taxon>Bacillaceae</taxon>
        <taxon>Bacillus</taxon>
        <taxon>Bacillus amyloliquefaciens group</taxon>
    </lineage>
</organism>
<proteinExistence type="inferred from homology"/>
<dbReference type="EC" id="1.1.1.103" evidence="1"/>
<dbReference type="EMBL" id="CP000560">
    <property type="protein sequence ID" value="ABS74046.1"/>
    <property type="molecule type" value="Genomic_DNA"/>
</dbReference>
<dbReference type="SMR" id="A7Z4X0"/>
<dbReference type="KEGG" id="bay:RBAM_016830"/>
<dbReference type="HOGENOM" id="CLU_026673_11_0_9"/>
<dbReference type="UniPathway" id="UPA00046">
    <property type="reaction ID" value="UER00505"/>
</dbReference>
<dbReference type="Proteomes" id="UP000001120">
    <property type="component" value="Chromosome"/>
</dbReference>
<dbReference type="GO" id="GO:0005737">
    <property type="term" value="C:cytoplasm"/>
    <property type="evidence" value="ECO:0007669"/>
    <property type="project" value="UniProtKB-SubCell"/>
</dbReference>
<dbReference type="GO" id="GO:0008743">
    <property type="term" value="F:L-threonine 3-dehydrogenase activity"/>
    <property type="evidence" value="ECO:0007669"/>
    <property type="project" value="UniProtKB-UniRule"/>
</dbReference>
<dbReference type="GO" id="GO:0008270">
    <property type="term" value="F:zinc ion binding"/>
    <property type="evidence" value="ECO:0007669"/>
    <property type="project" value="UniProtKB-UniRule"/>
</dbReference>
<dbReference type="GO" id="GO:0019518">
    <property type="term" value="P:L-threonine catabolic process to glycine"/>
    <property type="evidence" value="ECO:0007669"/>
    <property type="project" value="UniProtKB-UniPathway"/>
</dbReference>
<dbReference type="CDD" id="cd05281">
    <property type="entry name" value="TDH"/>
    <property type="match status" value="1"/>
</dbReference>
<dbReference type="Gene3D" id="3.90.180.10">
    <property type="entry name" value="Medium-chain alcohol dehydrogenases, catalytic domain"/>
    <property type="match status" value="1"/>
</dbReference>
<dbReference type="Gene3D" id="3.40.50.720">
    <property type="entry name" value="NAD(P)-binding Rossmann-like Domain"/>
    <property type="match status" value="1"/>
</dbReference>
<dbReference type="HAMAP" id="MF_00627">
    <property type="entry name" value="Thr_dehydrog"/>
    <property type="match status" value="1"/>
</dbReference>
<dbReference type="InterPro" id="IPR013149">
    <property type="entry name" value="ADH-like_C"/>
</dbReference>
<dbReference type="InterPro" id="IPR013154">
    <property type="entry name" value="ADH-like_N"/>
</dbReference>
<dbReference type="InterPro" id="IPR002328">
    <property type="entry name" value="ADH_Zn_CS"/>
</dbReference>
<dbReference type="InterPro" id="IPR011032">
    <property type="entry name" value="GroES-like_sf"/>
</dbReference>
<dbReference type="InterPro" id="IPR004627">
    <property type="entry name" value="L-Threonine_3-DHase"/>
</dbReference>
<dbReference type="InterPro" id="IPR036291">
    <property type="entry name" value="NAD(P)-bd_dom_sf"/>
</dbReference>
<dbReference type="InterPro" id="IPR020843">
    <property type="entry name" value="PKS_ER"/>
</dbReference>
<dbReference type="InterPro" id="IPR050129">
    <property type="entry name" value="Zn_alcohol_dh"/>
</dbReference>
<dbReference type="NCBIfam" id="NF003808">
    <property type="entry name" value="PRK05396.1"/>
    <property type="match status" value="1"/>
</dbReference>
<dbReference type="NCBIfam" id="TIGR00692">
    <property type="entry name" value="tdh"/>
    <property type="match status" value="1"/>
</dbReference>
<dbReference type="PANTHER" id="PTHR43401">
    <property type="entry name" value="L-THREONINE 3-DEHYDROGENASE"/>
    <property type="match status" value="1"/>
</dbReference>
<dbReference type="PANTHER" id="PTHR43401:SF2">
    <property type="entry name" value="L-THREONINE 3-DEHYDROGENASE"/>
    <property type="match status" value="1"/>
</dbReference>
<dbReference type="Pfam" id="PF08240">
    <property type="entry name" value="ADH_N"/>
    <property type="match status" value="1"/>
</dbReference>
<dbReference type="Pfam" id="PF00107">
    <property type="entry name" value="ADH_zinc_N"/>
    <property type="match status" value="1"/>
</dbReference>
<dbReference type="SMART" id="SM00829">
    <property type="entry name" value="PKS_ER"/>
    <property type="match status" value="1"/>
</dbReference>
<dbReference type="SUPFAM" id="SSF50129">
    <property type="entry name" value="GroES-like"/>
    <property type="match status" value="1"/>
</dbReference>
<dbReference type="SUPFAM" id="SSF51735">
    <property type="entry name" value="NAD(P)-binding Rossmann-fold domains"/>
    <property type="match status" value="1"/>
</dbReference>
<dbReference type="PROSITE" id="PS00059">
    <property type="entry name" value="ADH_ZINC"/>
    <property type="match status" value="1"/>
</dbReference>
<sequence>MGGKMKAIVKNENAFGATLKEIPIPSINENEVLIKVQAASICGTDVHIYNWDQWAQKRIKTPQVFGHEFSGIVAETGKHVTNVKTGDYVSAETHFVCGTCVPCLTGKHHVCTHTKILGVDTAGSFAEYVKVPARNVWKNPADMDPAVASVQEPLGNAVHTVLESSQLAGGSAAIIGCGPIGLMAVAVAKAAGASRIAAIDKNDYRLALAKKLGATITISADKEDPLEVIDTLTGGEGIDLVCEMSGHPAAIAQGLKMAANGGRFHMLSLPERPVTVDLTNDVVFKGLTVQGITGRKMFETWRQVSHLLESGLVDLTPVITHQLPLEDFEKGFDLMRKGQCGKVILIP</sequence>
<keyword id="KW-0963">Cytoplasm</keyword>
<keyword id="KW-0479">Metal-binding</keyword>
<keyword id="KW-0520">NAD</keyword>
<keyword id="KW-0560">Oxidoreductase</keyword>
<keyword id="KW-0862">Zinc</keyword>
<comment type="function">
    <text evidence="1">Catalyzes the NAD(+)-dependent oxidation of L-threonine to 2-amino-3-ketobutyrate.</text>
</comment>
<comment type="catalytic activity">
    <reaction evidence="1">
        <text>L-threonine + NAD(+) = (2S)-2-amino-3-oxobutanoate + NADH + H(+)</text>
        <dbReference type="Rhea" id="RHEA:13161"/>
        <dbReference type="ChEBI" id="CHEBI:15378"/>
        <dbReference type="ChEBI" id="CHEBI:57540"/>
        <dbReference type="ChEBI" id="CHEBI:57926"/>
        <dbReference type="ChEBI" id="CHEBI:57945"/>
        <dbReference type="ChEBI" id="CHEBI:78948"/>
        <dbReference type="EC" id="1.1.1.103"/>
    </reaction>
</comment>
<comment type="cofactor">
    <cofactor evidence="1">
        <name>Zn(2+)</name>
        <dbReference type="ChEBI" id="CHEBI:29105"/>
    </cofactor>
    <text evidence="1">Binds 2 Zn(2+) ions per subunit.</text>
</comment>
<comment type="pathway">
    <text evidence="1">Amino-acid degradation; L-threonine degradation via oxydo-reductase pathway; glycine from L-threonine: step 1/2.</text>
</comment>
<comment type="subunit">
    <text evidence="1">Homotetramer.</text>
</comment>
<comment type="subcellular location">
    <subcellularLocation>
        <location evidence="1">Cytoplasm</location>
    </subcellularLocation>
</comment>
<comment type="similarity">
    <text evidence="1">Belongs to the zinc-containing alcohol dehydrogenase family.</text>
</comment>
<gene>
    <name evidence="1" type="primary">tdh</name>
    <name type="ordered locus">RBAM_016830</name>
</gene>
<name>TDH_BACVZ</name>
<feature type="chain" id="PRO_1000051616" description="L-threonine 3-dehydrogenase">
    <location>
        <begin position="1"/>
        <end position="347"/>
    </location>
</feature>
<feature type="active site" description="Charge relay system" evidence="1">
    <location>
        <position position="44"/>
    </location>
</feature>
<feature type="active site" description="Charge relay system" evidence="1">
    <location>
        <position position="47"/>
    </location>
</feature>
<feature type="binding site" evidence="1">
    <location>
        <position position="42"/>
    </location>
    <ligand>
        <name>Zn(2+)</name>
        <dbReference type="ChEBI" id="CHEBI:29105"/>
        <label>1</label>
        <note>catalytic</note>
    </ligand>
</feature>
<feature type="binding site" evidence="1">
    <location>
        <position position="67"/>
    </location>
    <ligand>
        <name>Zn(2+)</name>
        <dbReference type="ChEBI" id="CHEBI:29105"/>
        <label>1</label>
        <note>catalytic</note>
    </ligand>
</feature>
<feature type="binding site" evidence="1">
    <location>
        <position position="68"/>
    </location>
    <ligand>
        <name>Zn(2+)</name>
        <dbReference type="ChEBI" id="CHEBI:29105"/>
        <label>1</label>
        <note>catalytic</note>
    </ligand>
</feature>
<feature type="binding site" evidence="1">
    <location>
        <position position="97"/>
    </location>
    <ligand>
        <name>Zn(2+)</name>
        <dbReference type="ChEBI" id="CHEBI:29105"/>
        <label>2</label>
    </ligand>
</feature>
<feature type="binding site" evidence="1">
    <location>
        <position position="100"/>
    </location>
    <ligand>
        <name>Zn(2+)</name>
        <dbReference type="ChEBI" id="CHEBI:29105"/>
        <label>2</label>
    </ligand>
</feature>
<feature type="binding site" evidence="1">
    <location>
        <position position="103"/>
    </location>
    <ligand>
        <name>Zn(2+)</name>
        <dbReference type="ChEBI" id="CHEBI:29105"/>
        <label>2</label>
    </ligand>
</feature>
<feature type="binding site" evidence="1">
    <location>
        <position position="111"/>
    </location>
    <ligand>
        <name>Zn(2+)</name>
        <dbReference type="ChEBI" id="CHEBI:29105"/>
        <label>2</label>
    </ligand>
</feature>
<feature type="binding site" evidence="1">
    <location>
        <position position="180"/>
    </location>
    <ligand>
        <name>NAD(+)</name>
        <dbReference type="ChEBI" id="CHEBI:57540"/>
    </ligand>
</feature>
<feature type="binding site" evidence="1">
    <location>
        <position position="200"/>
    </location>
    <ligand>
        <name>NAD(+)</name>
        <dbReference type="ChEBI" id="CHEBI:57540"/>
    </ligand>
</feature>
<feature type="binding site" evidence="1">
    <location>
        <position position="205"/>
    </location>
    <ligand>
        <name>NAD(+)</name>
        <dbReference type="ChEBI" id="CHEBI:57540"/>
    </ligand>
</feature>
<feature type="binding site" evidence="1">
    <location>
        <begin position="267"/>
        <end position="269"/>
    </location>
    <ligand>
        <name>NAD(+)</name>
        <dbReference type="ChEBI" id="CHEBI:57540"/>
    </ligand>
</feature>
<feature type="binding site" evidence="1">
    <location>
        <begin position="292"/>
        <end position="293"/>
    </location>
    <ligand>
        <name>NAD(+)</name>
        <dbReference type="ChEBI" id="CHEBI:57540"/>
    </ligand>
</feature>
<feature type="site" description="Important for catalytic activity for the proton relay mechanism but does not participate directly in the coordination of zinc atom" evidence="1">
    <location>
        <position position="152"/>
    </location>
</feature>